<dbReference type="EC" id="6.3.3.1" evidence="1"/>
<dbReference type="EMBL" id="AE005672">
    <property type="protein sequence ID" value="AAK74236.1"/>
    <property type="molecule type" value="Genomic_DNA"/>
</dbReference>
<dbReference type="PIR" id="C95005">
    <property type="entry name" value="C95005"/>
</dbReference>
<dbReference type="RefSeq" id="WP_001284589.1">
    <property type="nucleotide sequence ID" value="NC_003028.3"/>
</dbReference>
<dbReference type="SMR" id="Q97TA2"/>
<dbReference type="IntAct" id="Q97TA2">
    <property type="interactions" value="1"/>
</dbReference>
<dbReference type="PaxDb" id="170187-SP_0047"/>
<dbReference type="EnsemblBacteria" id="AAK74236">
    <property type="protein sequence ID" value="AAK74236"/>
    <property type="gene ID" value="SP_0047"/>
</dbReference>
<dbReference type="KEGG" id="spn:SP_0047"/>
<dbReference type="eggNOG" id="COG0150">
    <property type="taxonomic scope" value="Bacteria"/>
</dbReference>
<dbReference type="PhylomeDB" id="Q97TA2"/>
<dbReference type="BioCyc" id="SPNE170187:G1FZB-53-MONOMER"/>
<dbReference type="UniPathway" id="UPA00074">
    <property type="reaction ID" value="UER00129"/>
</dbReference>
<dbReference type="Proteomes" id="UP000000585">
    <property type="component" value="Chromosome"/>
</dbReference>
<dbReference type="GO" id="GO:0005829">
    <property type="term" value="C:cytosol"/>
    <property type="evidence" value="ECO:0007669"/>
    <property type="project" value="TreeGrafter"/>
</dbReference>
<dbReference type="GO" id="GO:0005524">
    <property type="term" value="F:ATP binding"/>
    <property type="evidence" value="ECO:0007669"/>
    <property type="project" value="UniProtKB-KW"/>
</dbReference>
<dbReference type="GO" id="GO:0004637">
    <property type="term" value="F:phosphoribosylamine-glycine ligase activity"/>
    <property type="evidence" value="ECO:0007669"/>
    <property type="project" value="TreeGrafter"/>
</dbReference>
<dbReference type="GO" id="GO:0004641">
    <property type="term" value="F:phosphoribosylformylglycinamidine cyclo-ligase activity"/>
    <property type="evidence" value="ECO:0007669"/>
    <property type="project" value="UniProtKB-UniRule"/>
</dbReference>
<dbReference type="GO" id="GO:0006189">
    <property type="term" value="P:'de novo' IMP biosynthetic process"/>
    <property type="evidence" value="ECO:0007669"/>
    <property type="project" value="UniProtKB-UniRule"/>
</dbReference>
<dbReference type="GO" id="GO:0046084">
    <property type="term" value="P:adenine biosynthetic process"/>
    <property type="evidence" value="ECO:0007669"/>
    <property type="project" value="TreeGrafter"/>
</dbReference>
<dbReference type="CDD" id="cd02196">
    <property type="entry name" value="PurM"/>
    <property type="match status" value="1"/>
</dbReference>
<dbReference type="FunFam" id="3.30.1330.10:FF:000001">
    <property type="entry name" value="Phosphoribosylformylglycinamidine cyclo-ligase"/>
    <property type="match status" value="1"/>
</dbReference>
<dbReference type="FunFam" id="3.90.650.10:FF:000011">
    <property type="entry name" value="Phosphoribosylformylglycinamidine cyclo-ligase"/>
    <property type="match status" value="1"/>
</dbReference>
<dbReference type="Gene3D" id="3.90.650.10">
    <property type="entry name" value="PurM-like C-terminal domain"/>
    <property type="match status" value="1"/>
</dbReference>
<dbReference type="Gene3D" id="3.30.1330.10">
    <property type="entry name" value="PurM-like, N-terminal domain"/>
    <property type="match status" value="1"/>
</dbReference>
<dbReference type="HAMAP" id="MF_00741">
    <property type="entry name" value="AIRS"/>
    <property type="match status" value="1"/>
</dbReference>
<dbReference type="InterPro" id="IPR010918">
    <property type="entry name" value="PurM-like_C_dom"/>
</dbReference>
<dbReference type="InterPro" id="IPR036676">
    <property type="entry name" value="PurM-like_C_sf"/>
</dbReference>
<dbReference type="InterPro" id="IPR016188">
    <property type="entry name" value="PurM-like_N"/>
</dbReference>
<dbReference type="InterPro" id="IPR036921">
    <property type="entry name" value="PurM-like_N_sf"/>
</dbReference>
<dbReference type="InterPro" id="IPR004733">
    <property type="entry name" value="PurM_cligase"/>
</dbReference>
<dbReference type="NCBIfam" id="TIGR00878">
    <property type="entry name" value="purM"/>
    <property type="match status" value="1"/>
</dbReference>
<dbReference type="PANTHER" id="PTHR10520:SF12">
    <property type="entry name" value="TRIFUNCTIONAL PURINE BIOSYNTHETIC PROTEIN ADENOSINE-3"/>
    <property type="match status" value="1"/>
</dbReference>
<dbReference type="PANTHER" id="PTHR10520">
    <property type="entry name" value="TRIFUNCTIONAL PURINE BIOSYNTHETIC PROTEIN ADENOSINE-3-RELATED"/>
    <property type="match status" value="1"/>
</dbReference>
<dbReference type="Pfam" id="PF00586">
    <property type="entry name" value="AIRS"/>
    <property type="match status" value="1"/>
</dbReference>
<dbReference type="Pfam" id="PF02769">
    <property type="entry name" value="AIRS_C"/>
    <property type="match status" value="1"/>
</dbReference>
<dbReference type="SUPFAM" id="SSF56042">
    <property type="entry name" value="PurM C-terminal domain-like"/>
    <property type="match status" value="1"/>
</dbReference>
<dbReference type="SUPFAM" id="SSF55326">
    <property type="entry name" value="PurM N-terminal domain-like"/>
    <property type="match status" value="1"/>
</dbReference>
<keyword id="KW-0067">ATP-binding</keyword>
<keyword id="KW-0963">Cytoplasm</keyword>
<keyword id="KW-0436">Ligase</keyword>
<keyword id="KW-0547">Nucleotide-binding</keyword>
<keyword id="KW-0658">Purine biosynthesis</keyword>
<keyword id="KW-1185">Reference proteome</keyword>
<accession>Q97TA2</accession>
<comment type="catalytic activity">
    <reaction evidence="1">
        <text>2-formamido-N(1)-(5-O-phospho-beta-D-ribosyl)acetamidine + ATP = 5-amino-1-(5-phospho-beta-D-ribosyl)imidazole + ADP + phosphate + H(+)</text>
        <dbReference type="Rhea" id="RHEA:23032"/>
        <dbReference type="ChEBI" id="CHEBI:15378"/>
        <dbReference type="ChEBI" id="CHEBI:30616"/>
        <dbReference type="ChEBI" id="CHEBI:43474"/>
        <dbReference type="ChEBI" id="CHEBI:137981"/>
        <dbReference type="ChEBI" id="CHEBI:147287"/>
        <dbReference type="ChEBI" id="CHEBI:456216"/>
        <dbReference type="EC" id="6.3.3.1"/>
    </reaction>
</comment>
<comment type="pathway">
    <text evidence="1">Purine metabolism; IMP biosynthesis via de novo pathway; 5-amino-1-(5-phospho-D-ribosyl)imidazole from N(2)-formyl-N(1)-(5-phospho-D-ribosyl)glycinamide: step 2/2.</text>
</comment>
<comment type="interaction">
    <interactant intactId="EBI-6475165">
        <id>Q97TA2</id>
    </interactant>
    <interactant intactId="EBI-6475169">
        <id>A0A0H2UNI9</id>
        <label>SP_0412</label>
    </interactant>
    <organismsDiffer>false</organismsDiffer>
    <experiments>4</experiments>
</comment>
<comment type="subcellular location">
    <subcellularLocation>
        <location evidence="1">Cytoplasm</location>
    </subcellularLocation>
</comment>
<comment type="similarity">
    <text evidence="1">Belongs to the AIR synthase family.</text>
</comment>
<name>PUR5_STRPN</name>
<reference key="1">
    <citation type="journal article" date="2001" name="Science">
        <title>Complete genome sequence of a virulent isolate of Streptococcus pneumoniae.</title>
        <authorList>
            <person name="Tettelin H."/>
            <person name="Nelson K.E."/>
            <person name="Paulsen I.T."/>
            <person name="Eisen J.A."/>
            <person name="Read T.D."/>
            <person name="Peterson S.N."/>
            <person name="Heidelberg J.F."/>
            <person name="DeBoy R.T."/>
            <person name="Haft D.H."/>
            <person name="Dodson R.J."/>
            <person name="Durkin A.S."/>
            <person name="Gwinn M.L."/>
            <person name="Kolonay J.F."/>
            <person name="Nelson W.C."/>
            <person name="Peterson J.D."/>
            <person name="Umayam L.A."/>
            <person name="White O."/>
            <person name="Salzberg S.L."/>
            <person name="Lewis M.R."/>
            <person name="Radune D."/>
            <person name="Holtzapple E.K."/>
            <person name="Khouri H.M."/>
            <person name="Wolf A.M."/>
            <person name="Utterback T.R."/>
            <person name="Hansen C.L."/>
            <person name="McDonald L.A."/>
            <person name="Feldblyum T.V."/>
            <person name="Angiuoli S.V."/>
            <person name="Dickinson T."/>
            <person name="Hickey E.K."/>
            <person name="Holt I.E."/>
            <person name="Loftus B.J."/>
            <person name="Yang F."/>
            <person name="Smith H.O."/>
            <person name="Venter J.C."/>
            <person name="Dougherty B.A."/>
            <person name="Morrison D.A."/>
            <person name="Hollingshead S.K."/>
            <person name="Fraser C.M."/>
        </authorList>
    </citation>
    <scope>NUCLEOTIDE SEQUENCE [LARGE SCALE GENOMIC DNA]</scope>
    <source>
        <strain>ATCC BAA-334 / TIGR4</strain>
    </source>
</reference>
<gene>
    <name evidence="1" type="primary">purM</name>
    <name type="ordered locus">SP_0047</name>
</gene>
<feature type="chain" id="PRO_0000148259" description="Phosphoribosylformylglycinamidine cyclo-ligase">
    <location>
        <begin position="1"/>
        <end position="340"/>
    </location>
</feature>
<protein>
    <recommendedName>
        <fullName evidence="1">Phosphoribosylformylglycinamidine cyclo-ligase</fullName>
        <ecNumber evidence="1">6.3.3.1</ecNumber>
    </recommendedName>
    <alternativeName>
        <fullName evidence="1">AIR synthase</fullName>
    </alternativeName>
    <alternativeName>
        <fullName evidence="1">AIRS</fullName>
    </alternativeName>
    <alternativeName>
        <fullName evidence="1">Phosphoribosyl-aminoimidazole synthetase</fullName>
    </alternativeName>
</protein>
<evidence type="ECO:0000255" key="1">
    <source>
        <dbReference type="HAMAP-Rule" id="MF_00741"/>
    </source>
</evidence>
<organism>
    <name type="scientific">Streptococcus pneumoniae serotype 4 (strain ATCC BAA-334 / TIGR4)</name>
    <dbReference type="NCBI Taxonomy" id="170187"/>
    <lineage>
        <taxon>Bacteria</taxon>
        <taxon>Bacillati</taxon>
        <taxon>Bacillota</taxon>
        <taxon>Bacilli</taxon>
        <taxon>Lactobacillales</taxon>
        <taxon>Streptococcaceae</taxon>
        <taxon>Streptococcus</taxon>
    </lineage>
</organism>
<sequence length="340" mass="36502">MANKNAYAQSGVDVEAGYEVVERIKKHVARTERAGVMGALGGFGGMFDLSKTGVKEPVLISGTDGVGTKLMLAIKYDKHDTIGQDCVAMCVNDIIAAGAEPLYFLDYVATGKNEPAKLEQVVAGVAEGCVQAGAALIGGETAEMPGMYGEDDYDLAGFAVGVAEKSQIIDGSKVVEGDVLLGLASSGIHSNGYSLVRRVFADYTGEEVLPELEGKKLKEVLLEPTRIYVKAVLPLIKEELVNGIAHITGGGFIENVPRMFADDLAAEIDESKVPVLPIFKTLEKYGQIKHEEMFEIFNMGVGLMLAVSPENVERVKELLDEAVYEIGRIVKKENESVIIK</sequence>
<proteinExistence type="evidence at protein level"/>